<gene>
    <name evidence="1" type="primary">rsmG</name>
    <name type="synonym">gidB</name>
    <name type="ordered locus">CCNA_03870</name>
</gene>
<reference key="1">
    <citation type="submission" date="1999-06" db="EMBL/GenBank/DDBJ databases">
        <title>Partial 50K and complete gidA, gidB, parA and parB genes from Caulbacter crescentus.</title>
        <authorList>
            <person name="Ho H.-Y.H."/>
            <person name="Draper G.C."/>
            <person name="Gober J.W."/>
        </authorList>
    </citation>
    <scope>NUCLEOTIDE SEQUENCE [GENOMIC DNA]</scope>
</reference>
<reference key="2">
    <citation type="journal article" date="2010" name="J. Bacteriol.">
        <title>The genetic basis of laboratory adaptation in Caulobacter crescentus.</title>
        <authorList>
            <person name="Marks M.E."/>
            <person name="Castro-Rojas C.M."/>
            <person name="Teiling C."/>
            <person name="Du L."/>
            <person name="Kapatral V."/>
            <person name="Walunas T.L."/>
            <person name="Crosson S."/>
        </authorList>
    </citation>
    <scope>NUCLEOTIDE SEQUENCE [LARGE SCALE GENOMIC DNA]</scope>
    <source>
        <strain>NA1000 / CB15N</strain>
    </source>
</reference>
<keyword id="KW-0963">Cytoplasm</keyword>
<keyword id="KW-0489">Methyltransferase</keyword>
<keyword id="KW-1185">Reference proteome</keyword>
<keyword id="KW-0698">rRNA processing</keyword>
<keyword id="KW-0949">S-adenosyl-L-methionine</keyword>
<keyword id="KW-0808">Transferase</keyword>
<name>RSMG_CAUVN</name>
<dbReference type="EC" id="2.1.1.170" evidence="1"/>
<dbReference type="EMBL" id="U87804">
    <property type="protein sequence ID" value="AAD40694.1"/>
    <property type="status" value="ALT_INIT"/>
    <property type="molecule type" value="Genomic_DNA"/>
</dbReference>
<dbReference type="EMBL" id="CP001340">
    <property type="protein sequence ID" value="ACL97335.1"/>
    <property type="molecule type" value="Genomic_DNA"/>
</dbReference>
<dbReference type="RefSeq" id="WP_015923358.1">
    <property type="nucleotide sequence ID" value="NC_011916.1"/>
</dbReference>
<dbReference type="RefSeq" id="YP_002519243.1">
    <property type="nucleotide sequence ID" value="NC_011916.1"/>
</dbReference>
<dbReference type="SMR" id="B8GW32"/>
<dbReference type="GeneID" id="7332718"/>
<dbReference type="KEGG" id="ccs:CCNA_03870"/>
<dbReference type="PATRIC" id="fig|565050.3.peg.3775"/>
<dbReference type="HOGENOM" id="CLU_065341_1_0_5"/>
<dbReference type="OrthoDB" id="9808773at2"/>
<dbReference type="PhylomeDB" id="B8GW32"/>
<dbReference type="Proteomes" id="UP000001364">
    <property type="component" value="Chromosome"/>
</dbReference>
<dbReference type="GO" id="GO:0005829">
    <property type="term" value="C:cytosol"/>
    <property type="evidence" value="ECO:0007669"/>
    <property type="project" value="TreeGrafter"/>
</dbReference>
<dbReference type="GO" id="GO:0070043">
    <property type="term" value="F:rRNA (guanine-N7-)-methyltransferase activity"/>
    <property type="evidence" value="ECO:0007669"/>
    <property type="project" value="UniProtKB-UniRule"/>
</dbReference>
<dbReference type="Gene3D" id="3.40.50.150">
    <property type="entry name" value="Vaccinia Virus protein VP39"/>
    <property type="match status" value="1"/>
</dbReference>
<dbReference type="HAMAP" id="MF_00074">
    <property type="entry name" value="16SrRNA_methyltr_G"/>
    <property type="match status" value="1"/>
</dbReference>
<dbReference type="InterPro" id="IPR003682">
    <property type="entry name" value="rRNA_ssu_MeTfrase_G"/>
</dbReference>
<dbReference type="InterPro" id="IPR029063">
    <property type="entry name" value="SAM-dependent_MTases_sf"/>
</dbReference>
<dbReference type="NCBIfam" id="TIGR00138">
    <property type="entry name" value="rsmG_gidB"/>
    <property type="match status" value="1"/>
</dbReference>
<dbReference type="PANTHER" id="PTHR31760">
    <property type="entry name" value="S-ADENOSYL-L-METHIONINE-DEPENDENT METHYLTRANSFERASES SUPERFAMILY PROTEIN"/>
    <property type="match status" value="1"/>
</dbReference>
<dbReference type="PANTHER" id="PTHR31760:SF0">
    <property type="entry name" value="S-ADENOSYL-L-METHIONINE-DEPENDENT METHYLTRANSFERASES SUPERFAMILY PROTEIN"/>
    <property type="match status" value="1"/>
</dbReference>
<dbReference type="Pfam" id="PF02527">
    <property type="entry name" value="GidB"/>
    <property type="match status" value="1"/>
</dbReference>
<dbReference type="SUPFAM" id="SSF53335">
    <property type="entry name" value="S-adenosyl-L-methionine-dependent methyltransferases"/>
    <property type="match status" value="1"/>
</dbReference>
<feature type="chain" id="PRO_0000378309" description="Ribosomal RNA small subunit methyltransferase G">
    <location>
        <begin position="1"/>
        <end position="216"/>
    </location>
</feature>
<feature type="binding site" evidence="1">
    <location>
        <position position="82"/>
    </location>
    <ligand>
        <name>S-adenosyl-L-methionine</name>
        <dbReference type="ChEBI" id="CHEBI:59789"/>
    </ligand>
</feature>
<feature type="binding site" evidence="1">
    <location>
        <position position="87"/>
    </location>
    <ligand>
        <name>S-adenosyl-L-methionine</name>
        <dbReference type="ChEBI" id="CHEBI:59789"/>
    </ligand>
</feature>
<feature type="binding site" evidence="1">
    <location>
        <begin position="135"/>
        <end position="136"/>
    </location>
    <ligand>
        <name>S-adenosyl-L-methionine</name>
        <dbReference type="ChEBI" id="CHEBI:59789"/>
    </ligand>
</feature>
<feature type="binding site" evidence="1">
    <location>
        <position position="148"/>
    </location>
    <ligand>
        <name>S-adenosyl-L-methionine</name>
        <dbReference type="ChEBI" id="CHEBI:59789"/>
    </ligand>
</feature>
<comment type="function">
    <text evidence="1">Specifically methylates the N7 position of guanine in position 527 of 16S rRNA.</text>
</comment>
<comment type="catalytic activity">
    <reaction evidence="1">
        <text>guanosine(527) in 16S rRNA + S-adenosyl-L-methionine = N(7)-methylguanosine(527) in 16S rRNA + S-adenosyl-L-homocysteine</text>
        <dbReference type="Rhea" id="RHEA:42732"/>
        <dbReference type="Rhea" id="RHEA-COMP:10209"/>
        <dbReference type="Rhea" id="RHEA-COMP:10210"/>
        <dbReference type="ChEBI" id="CHEBI:57856"/>
        <dbReference type="ChEBI" id="CHEBI:59789"/>
        <dbReference type="ChEBI" id="CHEBI:74269"/>
        <dbReference type="ChEBI" id="CHEBI:74480"/>
        <dbReference type="EC" id="2.1.1.170"/>
    </reaction>
</comment>
<comment type="subcellular location">
    <subcellularLocation>
        <location evidence="1">Cytoplasm</location>
    </subcellularLocation>
</comment>
<comment type="similarity">
    <text evidence="1">Belongs to the methyltransferase superfamily. RNA methyltransferase RsmG family.</text>
</comment>
<comment type="sequence caution" evidence="2">
    <conflict type="erroneous initiation">
        <sequence resource="EMBL-CDS" id="AAD40694"/>
    </conflict>
</comment>
<organism>
    <name type="scientific">Caulobacter vibrioides (strain NA1000 / CB15N)</name>
    <name type="common">Caulobacter crescentus</name>
    <dbReference type="NCBI Taxonomy" id="565050"/>
    <lineage>
        <taxon>Bacteria</taxon>
        <taxon>Pseudomonadati</taxon>
        <taxon>Pseudomonadota</taxon>
        <taxon>Alphaproteobacteria</taxon>
        <taxon>Caulobacterales</taxon>
        <taxon>Caulobacteraceae</taxon>
        <taxon>Caulobacter</taxon>
    </lineage>
</organism>
<accession>B8GW32</accession>
<accession>Q9XBF7</accession>
<proteinExistence type="inferred from homology"/>
<evidence type="ECO:0000255" key="1">
    <source>
        <dbReference type="HAMAP-Rule" id="MF_00074"/>
    </source>
</evidence>
<evidence type="ECO:0000305" key="2"/>
<sequence>MQPDLALAPEAVLDAAGFQALVGATDAQIEDLTRFQTLLAEWNEVMNLVGPLTIATYWTRHALDSAQLIPLAPEATAWADLGAGAGLPGVVLAILLKGRAGAKVHLVESMIKRCRFLEVVAKDLDLPVQIHNARAEDLKLKVDIVTARACAPMTKLLGFAEPYLRNGAVGLFLKGQDVETELSEARKAWTFESELRTSQSDPRGRIVQVKRLSRVR</sequence>
<protein>
    <recommendedName>
        <fullName evidence="1">Ribosomal RNA small subunit methyltransferase G</fullName>
        <ecNumber evidence="1">2.1.1.170</ecNumber>
    </recommendedName>
    <alternativeName>
        <fullName evidence="1">16S rRNA 7-methylguanosine methyltransferase</fullName>
        <shortName evidence="1">16S rRNA m7G methyltransferase</shortName>
    </alternativeName>
    <alternativeName>
        <fullName>Glucose-inhibited division protein B</fullName>
    </alternativeName>
</protein>